<organism>
    <name type="scientific">Leptospira borgpetersenii serovar Hardjo-bovis (strain L550)</name>
    <dbReference type="NCBI Taxonomy" id="355276"/>
    <lineage>
        <taxon>Bacteria</taxon>
        <taxon>Pseudomonadati</taxon>
        <taxon>Spirochaetota</taxon>
        <taxon>Spirochaetia</taxon>
        <taxon>Leptospirales</taxon>
        <taxon>Leptospiraceae</taxon>
        <taxon>Leptospira</taxon>
    </lineage>
</organism>
<keyword id="KW-0067">ATP-binding</keyword>
<keyword id="KW-0963">Cytoplasm</keyword>
<keyword id="KW-0436">Ligase</keyword>
<keyword id="KW-0547">Nucleotide-binding</keyword>
<keyword id="KW-0819">tRNA processing</keyword>
<reference key="1">
    <citation type="journal article" date="2006" name="Proc. Natl. Acad. Sci. U.S.A.">
        <title>Genome reduction in Leptospira borgpetersenii reflects limited transmission potential.</title>
        <authorList>
            <person name="Bulach D.M."/>
            <person name="Zuerner R.L."/>
            <person name="Wilson P."/>
            <person name="Seemann T."/>
            <person name="McGrath A."/>
            <person name="Cullen P.A."/>
            <person name="Davis J."/>
            <person name="Johnson M."/>
            <person name="Kuczek E."/>
            <person name="Alt D.P."/>
            <person name="Peterson-Burch B."/>
            <person name="Coppel R.L."/>
            <person name="Rood J.I."/>
            <person name="Davies J.K."/>
            <person name="Adler B."/>
        </authorList>
    </citation>
    <scope>NUCLEOTIDE SEQUENCE [LARGE SCALE GENOMIC DNA]</scope>
    <source>
        <strain>L550</strain>
    </source>
</reference>
<proteinExistence type="inferred from homology"/>
<comment type="function">
    <text evidence="1">Ligates lysine onto the cytidine present at position 34 of the AUA codon-specific tRNA(Ile) that contains the anticodon CAU, in an ATP-dependent manner. Cytidine is converted to lysidine, thus changing the amino acid specificity of the tRNA from methionine to isoleucine.</text>
</comment>
<comment type="catalytic activity">
    <reaction evidence="1">
        <text>cytidine(34) in tRNA(Ile2) + L-lysine + ATP = lysidine(34) in tRNA(Ile2) + AMP + diphosphate + H(+)</text>
        <dbReference type="Rhea" id="RHEA:43744"/>
        <dbReference type="Rhea" id="RHEA-COMP:10625"/>
        <dbReference type="Rhea" id="RHEA-COMP:10670"/>
        <dbReference type="ChEBI" id="CHEBI:15378"/>
        <dbReference type="ChEBI" id="CHEBI:30616"/>
        <dbReference type="ChEBI" id="CHEBI:32551"/>
        <dbReference type="ChEBI" id="CHEBI:33019"/>
        <dbReference type="ChEBI" id="CHEBI:82748"/>
        <dbReference type="ChEBI" id="CHEBI:83665"/>
        <dbReference type="ChEBI" id="CHEBI:456215"/>
        <dbReference type="EC" id="6.3.4.19"/>
    </reaction>
</comment>
<comment type="subcellular location">
    <subcellularLocation>
        <location evidence="1">Cytoplasm</location>
    </subcellularLocation>
</comment>
<comment type="domain">
    <text>The N-terminal region contains the highly conserved SGGXDS motif, predicted to be a P-loop motif involved in ATP binding.</text>
</comment>
<comment type="similarity">
    <text evidence="1">Belongs to the tRNA(Ile)-lysidine synthase family.</text>
</comment>
<accession>Q04XC4</accession>
<sequence>MRDKISESTRNIFDTVWKRIFPFHEMILSRPAVLSYSGGKDSSLLLHFYFWLWAEKKIPVPCIYHLDHSIRFNLEQEKKILDYTESTFPFPNLFKKKNIPALSQKLGKTLEETGRAFRYKDLEKISNQYEGYIVTGHHSTDYLETVFLNLIRGGGWNSLRTLGWYEKNRFRPLFAFTEDEIKTISQSESWPIFEDESNQSNEYLRNRIRNYILPLLLQEGADPDRIYKNFHRMEKPTSKILLKEVSSHKTPSFLKIDVWVLNDLSERERKFFIDRYLRSLNLHPTTRNFFQDLMDCLKKMNSFGIENKEAWFWKSSSYDLYVIPKNSLCLKKFKLESKNMILKWNGSQKKISPGFIPGLCSPGAKIRKNGMSIEISEILRQKEIPVPVRKMLPILYREGKVDVICLSLWDPRLGDIVADRSRNFI</sequence>
<protein>
    <recommendedName>
        <fullName evidence="1">tRNA(Ile)-lysidine synthase</fullName>
        <ecNumber evidence="1">6.3.4.19</ecNumber>
    </recommendedName>
    <alternativeName>
        <fullName evidence="1">tRNA(Ile)-2-lysyl-cytidine synthase</fullName>
    </alternativeName>
    <alternativeName>
        <fullName evidence="1">tRNA(Ile)-lysidine synthetase</fullName>
    </alternativeName>
</protein>
<dbReference type="EC" id="6.3.4.19" evidence="1"/>
<dbReference type="EMBL" id="CP000348">
    <property type="protein sequence ID" value="ABJ80271.1"/>
    <property type="molecule type" value="Genomic_DNA"/>
</dbReference>
<dbReference type="SMR" id="Q04XC4"/>
<dbReference type="KEGG" id="lbl:LBL_2955"/>
<dbReference type="HOGENOM" id="CLU_018869_0_1_12"/>
<dbReference type="GO" id="GO:0005737">
    <property type="term" value="C:cytoplasm"/>
    <property type="evidence" value="ECO:0007669"/>
    <property type="project" value="UniProtKB-SubCell"/>
</dbReference>
<dbReference type="GO" id="GO:0005524">
    <property type="term" value="F:ATP binding"/>
    <property type="evidence" value="ECO:0007669"/>
    <property type="project" value="UniProtKB-UniRule"/>
</dbReference>
<dbReference type="GO" id="GO:0032267">
    <property type="term" value="F:tRNA(Ile)-lysidine synthase activity"/>
    <property type="evidence" value="ECO:0007669"/>
    <property type="project" value="UniProtKB-EC"/>
</dbReference>
<dbReference type="GO" id="GO:0006400">
    <property type="term" value="P:tRNA modification"/>
    <property type="evidence" value="ECO:0007669"/>
    <property type="project" value="UniProtKB-UniRule"/>
</dbReference>
<dbReference type="CDD" id="cd01992">
    <property type="entry name" value="TilS_N"/>
    <property type="match status" value="1"/>
</dbReference>
<dbReference type="Gene3D" id="3.40.50.620">
    <property type="entry name" value="HUPs"/>
    <property type="match status" value="1"/>
</dbReference>
<dbReference type="HAMAP" id="MF_01161">
    <property type="entry name" value="tRNA_Ile_lys_synt"/>
    <property type="match status" value="1"/>
</dbReference>
<dbReference type="InterPro" id="IPR014729">
    <property type="entry name" value="Rossmann-like_a/b/a_fold"/>
</dbReference>
<dbReference type="InterPro" id="IPR011063">
    <property type="entry name" value="TilS/TtcA_N"/>
</dbReference>
<dbReference type="InterPro" id="IPR012094">
    <property type="entry name" value="tRNA_Ile_lys_synt"/>
</dbReference>
<dbReference type="InterPro" id="IPR012795">
    <property type="entry name" value="tRNA_Ile_lys_synt_N"/>
</dbReference>
<dbReference type="NCBIfam" id="TIGR02432">
    <property type="entry name" value="lysidine_TilS_N"/>
    <property type="match status" value="1"/>
</dbReference>
<dbReference type="PANTHER" id="PTHR43033">
    <property type="entry name" value="TRNA(ILE)-LYSIDINE SYNTHASE-RELATED"/>
    <property type="match status" value="1"/>
</dbReference>
<dbReference type="PANTHER" id="PTHR43033:SF1">
    <property type="entry name" value="TRNA(ILE)-LYSIDINE SYNTHASE-RELATED"/>
    <property type="match status" value="1"/>
</dbReference>
<dbReference type="Pfam" id="PF01171">
    <property type="entry name" value="ATP_bind_3"/>
    <property type="match status" value="1"/>
</dbReference>
<dbReference type="SUPFAM" id="SSF52402">
    <property type="entry name" value="Adenine nucleotide alpha hydrolases-like"/>
    <property type="match status" value="1"/>
</dbReference>
<name>TILS_LEPBL</name>
<evidence type="ECO:0000255" key="1">
    <source>
        <dbReference type="HAMAP-Rule" id="MF_01161"/>
    </source>
</evidence>
<feature type="chain" id="PRO_1000065618" description="tRNA(Ile)-lysidine synthase">
    <location>
        <begin position="1"/>
        <end position="425"/>
    </location>
</feature>
<feature type="binding site" evidence="1">
    <location>
        <begin position="37"/>
        <end position="42"/>
    </location>
    <ligand>
        <name>ATP</name>
        <dbReference type="ChEBI" id="CHEBI:30616"/>
    </ligand>
</feature>
<gene>
    <name evidence="1" type="primary">tilS</name>
    <name type="ordered locus">LBL_2955</name>
</gene>